<sequence length="291" mass="33031">MMKVYFIGTGGGAPSRRGLPAYLVRREGLSILMDCGEGTQITMIRNSLNIMNVNVIAITHLHADHVLGLPSLIQTMGMYDRKERLYILGPEGLKDLLTETFERTYFSPNFPIEFVSSYESQGIRVRPFRTCHVVPSQGYLVEEKDTANLDAERLRREGVTDWRVMRMLKEGKEVPWGDRVLKPEDYLIVKRGIRIAYTGDTRPCETVINSVKGVDLLLHDSTFEQGIDASEYGHSTSTEAATVAREAEVKRLALIHISARYRDTSEMLKQARRIFPMSFVPEDLSFLNLRA</sequence>
<feature type="chain" id="PRO_1000073684" description="Ribonuclease Z">
    <location>
        <begin position="1"/>
        <end position="291"/>
    </location>
</feature>
<feature type="active site" description="Proton acceptor" evidence="1">
    <location>
        <position position="64"/>
    </location>
</feature>
<feature type="binding site" evidence="1">
    <location>
        <position position="60"/>
    </location>
    <ligand>
        <name>Zn(2+)</name>
        <dbReference type="ChEBI" id="CHEBI:29105"/>
        <label>1</label>
        <note>catalytic</note>
    </ligand>
</feature>
<feature type="binding site" evidence="1">
    <location>
        <position position="62"/>
    </location>
    <ligand>
        <name>Zn(2+)</name>
        <dbReference type="ChEBI" id="CHEBI:29105"/>
        <label>1</label>
        <note>catalytic</note>
    </ligand>
</feature>
<feature type="binding site" evidence="1">
    <location>
        <position position="64"/>
    </location>
    <ligand>
        <name>Zn(2+)</name>
        <dbReference type="ChEBI" id="CHEBI:29105"/>
        <label>2</label>
        <note>catalytic</note>
    </ligand>
</feature>
<feature type="binding site" evidence="1">
    <location>
        <position position="65"/>
    </location>
    <ligand>
        <name>Zn(2+)</name>
        <dbReference type="ChEBI" id="CHEBI:29105"/>
        <label>2</label>
        <note>catalytic</note>
    </ligand>
</feature>
<feature type="binding site" evidence="1">
    <location>
        <position position="132"/>
    </location>
    <ligand>
        <name>Zn(2+)</name>
        <dbReference type="ChEBI" id="CHEBI:29105"/>
        <label>1</label>
        <note>catalytic</note>
    </ligand>
</feature>
<feature type="binding site" evidence="1">
    <location>
        <position position="200"/>
    </location>
    <ligand>
        <name>Zn(2+)</name>
        <dbReference type="ChEBI" id="CHEBI:29105"/>
        <label>1</label>
        <note>catalytic</note>
    </ligand>
</feature>
<feature type="binding site" evidence="1">
    <location>
        <position position="200"/>
    </location>
    <ligand>
        <name>Zn(2+)</name>
        <dbReference type="ChEBI" id="CHEBI:29105"/>
        <label>2</label>
        <note>catalytic</note>
    </ligand>
</feature>
<feature type="binding site" evidence="1">
    <location>
        <position position="256"/>
    </location>
    <ligand>
        <name>Zn(2+)</name>
        <dbReference type="ChEBI" id="CHEBI:29105"/>
        <label>2</label>
        <note>catalytic</note>
    </ligand>
</feature>
<dbReference type="EC" id="3.1.26.11" evidence="1"/>
<dbReference type="EMBL" id="CP000682">
    <property type="protein sequence ID" value="ABP95943.1"/>
    <property type="molecule type" value="Genomic_DNA"/>
</dbReference>
<dbReference type="RefSeq" id="WP_012021730.1">
    <property type="nucleotide sequence ID" value="NC_009440.1"/>
</dbReference>
<dbReference type="SMR" id="A4YHP1"/>
<dbReference type="STRING" id="399549.Msed_1788"/>
<dbReference type="GeneID" id="91756306"/>
<dbReference type="KEGG" id="mse:Msed_1788"/>
<dbReference type="eggNOG" id="arCOG00501">
    <property type="taxonomic scope" value="Archaea"/>
</dbReference>
<dbReference type="HOGENOM" id="CLU_031317_2_1_2"/>
<dbReference type="Proteomes" id="UP000000242">
    <property type="component" value="Chromosome"/>
</dbReference>
<dbReference type="GO" id="GO:0042781">
    <property type="term" value="F:3'-tRNA processing endoribonuclease activity"/>
    <property type="evidence" value="ECO:0007669"/>
    <property type="project" value="UniProtKB-UniRule"/>
</dbReference>
<dbReference type="GO" id="GO:0008270">
    <property type="term" value="F:zinc ion binding"/>
    <property type="evidence" value="ECO:0007669"/>
    <property type="project" value="UniProtKB-UniRule"/>
</dbReference>
<dbReference type="CDD" id="cd07717">
    <property type="entry name" value="RNaseZ_ZiPD-like_MBL-fold"/>
    <property type="match status" value="1"/>
</dbReference>
<dbReference type="Gene3D" id="3.60.15.10">
    <property type="entry name" value="Ribonuclease Z/Hydroxyacylglutathione hydrolase-like"/>
    <property type="match status" value="1"/>
</dbReference>
<dbReference type="HAMAP" id="MF_01818">
    <property type="entry name" value="RNase_Z_BN"/>
    <property type="match status" value="1"/>
</dbReference>
<dbReference type="InterPro" id="IPR001279">
    <property type="entry name" value="Metallo-B-lactamas"/>
</dbReference>
<dbReference type="InterPro" id="IPR036866">
    <property type="entry name" value="RibonucZ/Hydroxyglut_hydro"/>
</dbReference>
<dbReference type="InterPro" id="IPR013471">
    <property type="entry name" value="RNase_Z/BN"/>
</dbReference>
<dbReference type="NCBIfam" id="NF000801">
    <property type="entry name" value="PRK00055.1-3"/>
    <property type="match status" value="1"/>
</dbReference>
<dbReference type="NCBIfam" id="TIGR02651">
    <property type="entry name" value="RNase_Z"/>
    <property type="match status" value="1"/>
</dbReference>
<dbReference type="PANTHER" id="PTHR46018">
    <property type="entry name" value="ZINC PHOSPHODIESTERASE ELAC PROTEIN 1"/>
    <property type="match status" value="1"/>
</dbReference>
<dbReference type="PANTHER" id="PTHR46018:SF2">
    <property type="entry name" value="ZINC PHOSPHODIESTERASE ELAC PROTEIN 1"/>
    <property type="match status" value="1"/>
</dbReference>
<dbReference type="Pfam" id="PF00753">
    <property type="entry name" value="Lactamase_B"/>
    <property type="match status" value="1"/>
</dbReference>
<dbReference type="Pfam" id="PF12706">
    <property type="entry name" value="Lactamase_B_2"/>
    <property type="match status" value="1"/>
</dbReference>
<dbReference type="SUPFAM" id="SSF56281">
    <property type="entry name" value="Metallo-hydrolase/oxidoreductase"/>
    <property type="match status" value="1"/>
</dbReference>
<keyword id="KW-0255">Endonuclease</keyword>
<keyword id="KW-0378">Hydrolase</keyword>
<keyword id="KW-0479">Metal-binding</keyword>
<keyword id="KW-0540">Nuclease</keyword>
<keyword id="KW-1185">Reference proteome</keyword>
<keyword id="KW-0819">tRNA processing</keyword>
<keyword id="KW-0862">Zinc</keyword>
<reference key="1">
    <citation type="journal article" date="2008" name="Appl. Environ. Microbiol.">
        <title>The genome sequence of the metal-mobilizing, extremely thermoacidophilic archaeon Metallosphaera sedula provides insights into bioleaching-associated metabolism.</title>
        <authorList>
            <person name="Auernik K.S."/>
            <person name="Maezato Y."/>
            <person name="Blum P.H."/>
            <person name="Kelly R.M."/>
        </authorList>
    </citation>
    <scope>NUCLEOTIDE SEQUENCE [LARGE SCALE GENOMIC DNA]</scope>
    <source>
        <strain>ATCC 51363 / DSM 5348 / JCM 9185 / NBRC 15509 / TH2</strain>
    </source>
</reference>
<comment type="function">
    <text evidence="1">Zinc phosphodiesterase, which displays some tRNA 3'-processing endonuclease activity. Probably involved in tRNA maturation, by removing a 3'-trailer from precursor tRNA.</text>
</comment>
<comment type="catalytic activity">
    <reaction evidence="1">
        <text>Endonucleolytic cleavage of RNA, removing extra 3' nucleotides from tRNA precursor, generating 3' termini of tRNAs. A 3'-hydroxy group is left at the tRNA terminus and a 5'-phosphoryl group is left at the trailer molecule.</text>
        <dbReference type="EC" id="3.1.26.11"/>
    </reaction>
</comment>
<comment type="cofactor">
    <cofactor evidence="1">
        <name>Zn(2+)</name>
        <dbReference type="ChEBI" id="CHEBI:29105"/>
    </cofactor>
    <text evidence="1">Binds 2 Zn(2+) ions.</text>
</comment>
<comment type="subunit">
    <text evidence="1">Homodimer.</text>
</comment>
<comment type="similarity">
    <text evidence="1">Belongs to the RNase Z family.</text>
</comment>
<proteinExistence type="inferred from homology"/>
<evidence type="ECO:0000255" key="1">
    <source>
        <dbReference type="HAMAP-Rule" id="MF_01818"/>
    </source>
</evidence>
<gene>
    <name evidence="1" type="primary">rnz</name>
    <name type="ordered locus">Msed_1788</name>
</gene>
<organism>
    <name type="scientific">Metallosphaera sedula (strain ATCC 51363 / DSM 5348 / JCM 9185 / NBRC 15509 / TH2)</name>
    <dbReference type="NCBI Taxonomy" id="399549"/>
    <lineage>
        <taxon>Archaea</taxon>
        <taxon>Thermoproteota</taxon>
        <taxon>Thermoprotei</taxon>
        <taxon>Sulfolobales</taxon>
        <taxon>Sulfolobaceae</taxon>
        <taxon>Metallosphaera</taxon>
    </lineage>
</organism>
<accession>A4YHP1</accession>
<name>RNZ_METS5</name>
<protein>
    <recommendedName>
        <fullName evidence="1">Ribonuclease Z</fullName>
        <shortName evidence="1">RNase Z</shortName>
        <ecNumber evidence="1">3.1.26.11</ecNumber>
    </recommendedName>
    <alternativeName>
        <fullName evidence="1">tRNA 3 endonuclease</fullName>
    </alternativeName>
    <alternativeName>
        <fullName evidence="1">tRNase Z</fullName>
    </alternativeName>
</protein>